<reference evidence="8 9" key="1">
    <citation type="journal article" date="2006" name="Dev. Genes Evol.">
        <title>Expression of a novel somite-formation-related gene, AmphiSom, during amphioxus development.</title>
        <authorList>
            <person name="Li X."/>
            <person name="Zhang W."/>
            <person name="Chen D."/>
            <person name="Lin Y."/>
            <person name="Huang X."/>
            <person name="Shi D."/>
            <person name="Zhang H."/>
        </authorList>
    </citation>
    <scope>NUCLEOTIDE SEQUENCE [MRNA]</scope>
    <scope>FUNCTION</scope>
    <scope>TISSUE SPECIFICITY</scope>
    <source>
        <tissue evidence="5">Neurula</tissue>
    </source>
</reference>
<reference evidence="8" key="2">
    <citation type="journal article" date="2005" name="Dev. Cell">
        <title>Groucho-associated transcriptional repressor ripply1 is required for proper transition from the presomitic mesoderm to somites.</title>
        <authorList>
            <person name="Kawamura A."/>
            <person name="Koshida S."/>
            <person name="Hijikata H."/>
            <person name="Ohbayashi A."/>
            <person name="Kondoh H."/>
            <person name="Takada S."/>
        </authorList>
    </citation>
    <scope>IDENTIFICATION AS RIPPLY</scope>
</reference>
<feature type="chain" id="PRO_0000307762" description="Protein ripply">
    <location>
        <begin position="1"/>
        <end position="154"/>
    </location>
</feature>
<feature type="region of interest" description="Disordered" evidence="4">
    <location>
        <begin position="54"/>
        <end position="86"/>
    </location>
</feature>
<feature type="region of interest" description="Ripply homology domain" evidence="3">
    <location>
        <begin position="85"/>
        <end position="119"/>
    </location>
</feature>
<feature type="region of interest" description="Disordered" evidence="4">
    <location>
        <begin position="121"/>
        <end position="154"/>
    </location>
</feature>
<feature type="short sequence motif" description="WRPW motif" evidence="3">
    <location>
        <begin position="38"/>
        <end position="41"/>
    </location>
</feature>
<feature type="compositionally biased region" description="Acidic residues" evidence="4">
    <location>
        <begin position="121"/>
        <end position="140"/>
    </location>
</feature>
<proteinExistence type="evidence at transcript level"/>
<keyword id="KW-0217">Developmental protein</keyword>
<keyword id="KW-0539">Nucleus</keyword>
<keyword id="KW-1185">Reference proteome</keyword>
<evidence type="ECO:0000250" key="1"/>
<evidence type="ECO:0000250" key="2">
    <source>
        <dbReference type="UniProtKB" id="Q2WG80"/>
    </source>
</evidence>
<evidence type="ECO:0000255" key="3"/>
<evidence type="ECO:0000256" key="4">
    <source>
        <dbReference type="SAM" id="MobiDB-lite"/>
    </source>
</evidence>
<evidence type="ECO:0000269" key="5">
    <source>
    </source>
</evidence>
<evidence type="ECO:0000303" key="6">
    <source>
    </source>
</evidence>
<evidence type="ECO:0000303" key="7">
    <source>
    </source>
</evidence>
<evidence type="ECO:0000305" key="8"/>
<evidence type="ECO:0000312" key="9">
    <source>
        <dbReference type="EMBL" id="AAW52554.1"/>
    </source>
</evidence>
<sequence>MEATRFTFNTATLCSAQHCNCHKLTTKASGMPVQPPVWRPWIVTERDILRRNAIRERRSKPYARPSSTSNGSTRGPEPGPTSFQHPVKLHWSKPVYDYMYQYGKQLLDAFPVQATICIVDEDPAQSDDSDFESDYEDDSDTDYKPLKRNAPILN</sequence>
<protein>
    <recommendedName>
        <fullName>Protein ripply</fullName>
    </recommendedName>
    <alternativeName>
        <fullName>Protein AmphiSom</fullName>
    </alternativeName>
</protein>
<organism>
    <name type="scientific">Branchiostoma belcheri</name>
    <name type="common">Amphioxus</name>
    <dbReference type="NCBI Taxonomy" id="7741"/>
    <lineage>
        <taxon>Eukaryota</taxon>
        <taxon>Metazoa</taxon>
        <taxon>Chordata</taxon>
        <taxon>Cephalochordata</taxon>
        <taxon>Leptocardii</taxon>
        <taxon>Amphioxiformes</taxon>
        <taxon>Branchiostomatidae</taxon>
        <taxon>Branchiostoma</taxon>
    </lineage>
</organism>
<dbReference type="EMBL" id="AY860953">
    <property type="protein sequence ID" value="AAW52554.1"/>
    <property type="molecule type" value="mRNA"/>
</dbReference>
<dbReference type="Proteomes" id="UP000515135">
    <property type="component" value="Unplaced"/>
</dbReference>
<dbReference type="GO" id="GO:0005634">
    <property type="term" value="C:nucleus"/>
    <property type="evidence" value="ECO:0000250"/>
    <property type="project" value="UniProtKB"/>
</dbReference>
<dbReference type="GO" id="GO:0009880">
    <property type="term" value="P:embryonic pattern specification"/>
    <property type="evidence" value="ECO:0007669"/>
    <property type="project" value="TreeGrafter"/>
</dbReference>
<dbReference type="GO" id="GO:0000122">
    <property type="term" value="P:negative regulation of transcription by RNA polymerase II"/>
    <property type="evidence" value="ECO:0007669"/>
    <property type="project" value="TreeGrafter"/>
</dbReference>
<dbReference type="GO" id="GO:0001756">
    <property type="term" value="P:somitogenesis"/>
    <property type="evidence" value="ECO:0000315"/>
    <property type="project" value="UniProtKB"/>
</dbReference>
<dbReference type="InterPro" id="IPR028127">
    <property type="entry name" value="Ripply_fam"/>
</dbReference>
<dbReference type="PANTHER" id="PTHR16770">
    <property type="entry name" value="PROTEIN RIPPLY-LIKE"/>
    <property type="match status" value="1"/>
</dbReference>
<dbReference type="PANTHER" id="PTHR16770:SF1">
    <property type="entry name" value="PROTEIN RIPPLY-LIKE"/>
    <property type="match status" value="1"/>
</dbReference>
<dbReference type="Pfam" id="PF14998">
    <property type="entry name" value="Ripply"/>
    <property type="match status" value="1"/>
</dbReference>
<accession>Q5I2D0</accession>
<gene>
    <name evidence="7" type="primary">RIPPLY</name>
    <name evidence="6" type="synonym">AmphiSom</name>
</gene>
<name>RIPP_BRABE</name>
<comment type="function">
    <text evidence="5">May play a role in somitogenesis.</text>
</comment>
<comment type="subcellular location">
    <subcellularLocation>
        <location evidence="2">Nucleus</location>
    </subcellularLocation>
</comment>
<comment type="tissue specificity">
    <text evidence="5">In the late gastrula stage, expression appears in the dorsal presomitic mesoderm and in the first three pairs of nascent somites. Expressed strongly in forming somites and then expression is rapidly down-regulated except in the first somite pair where expression is maintained for a longer period. Also expressed in the presumptive notochord and in the tail bud at the 48 hour larval stage. Expression disappears by the 72 hour stage.</text>
</comment>
<comment type="domain">
    <text evidence="1">The ripply homology domain is required for transcriptional repression.</text>
</comment>
<comment type="domain">
    <text evidence="2">The WRPW motif is required for binding to TLE/GROUCHO proteins.</text>
</comment>
<comment type="similarity">
    <text evidence="8">Belongs to the ripply family.</text>
</comment>